<name>EF2_METST</name>
<proteinExistence type="inferred from homology"/>
<protein>
    <recommendedName>
        <fullName evidence="1">Elongation factor 2</fullName>
        <shortName evidence="1">EF-2</shortName>
    </recommendedName>
</protein>
<sequence>MSRRDQMVKKIKDLMYKPDYIRNIGIVAHIDHGKTTLSDNLLAAAGMISSELAGDQRFLDFDEQEQERGITIDAANVSMVHSYEDNEYLINLIDTPGHVDFGGDVTRAMRAVDGAVVVVCAVEGVMPQTETVLRQALKENVRPVLFINKVDRLINELKLDDAELQNRFVKIIAGVNKLIKNMAPEQYKTEWQVKIEDGTVAFGSAYHNWAINVPEMLKTNITFKDIIQYCNEDNQKELAQKIKIEEVILGMVVEHLPSPKVAQEYRVPKIWSGDIESVEGQGMIATDSTSPLAVMVTDVSIDKHAGEIATGRVYGGSIEKGSEIFFVGSMSKARTQQVGVYMGPERINTDSVPAGNIVAITGARGAIAGETITDADHNIAPFESLEHISEPVVTVAVEAKNTKDLPKLIEVLRQVGKEDPTLRVEINEETGEHLIAGMGELHLEVIIYRINDKGLEVETSEPIVVYRETIAGTATNVEGKSPNKHNRFYIDIEPLSDDLMNAISEGEIPEGRVKGKELAKTFQEHGLDKDEAKKVWDVYKHSIFVNKTRGIQYLDEIKELLMEGFESALDDGPLANEKAMGIKISLMDAKIHEDAVHRGPAQVLPAIRKAVYGAIMLAQPTLMEPMQKVYISVPQDYMGAATREVQNRRGQIVEMGQEGDMSTIESKVPVSEMFGFAGDIRSAAEGRCIWSTENSGFERIPRELQNKIVKEIRERKGLTPEPYGPDHYLG</sequence>
<evidence type="ECO:0000255" key="1">
    <source>
        <dbReference type="HAMAP-Rule" id="MF_00054"/>
    </source>
</evidence>
<comment type="function">
    <text evidence="1">Catalyzes the GTP-dependent ribosomal translocation step during translation elongation. During this step, the ribosome changes from the pre-translocational (PRE) to the post-translocational (POST) state as the newly formed A-site-bound peptidyl-tRNA and P-site-bound deacylated tRNA move to the P and E sites, respectively. Catalyzes the coordinated movement of the two tRNA molecules, the mRNA and conformational changes in the ribosome.</text>
</comment>
<comment type="subcellular location">
    <subcellularLocation>
        <location evidence="1">Cytoplasm</location>
    </subcellularLocation>
</comment>
<comment type="similarity">
    <text evidence="1">Belongs to the TRAFAC class translation factor GTPase superfamily. Classic translation factor GTPase family. EF-G/EF-2 subfamily.</text>
</comment>
<keyword id="KW-0963">Cytoplasm</keyword>
<keyword id="KW-0251">Elongation factor</keyword>
<keyword id="KW-0342">GTP-binding</keyword>
<keyword id="KW-0547">Nucleotide-binding</keyword>
<keyword id="KW-0648">Protein biosynthesis</keyword>
<keyword id="KW-1185">Reference proteome</keyword>
<gene>
    <name evidence="1" type="primary">fusA</name>
    <name type="ordered locus">Msp_1367</name>
</gene>
<organism>
    <name type="scientific">Methanosphaera stadtmanae (strain ATCC 43021 / DSM 3091 / JCM 11832 / MCB-3)</name>
    <dbReference type="NCBI Taxonomy" id="339860"/>
    <lineage>
        <taxon>Archaea</taxon>
        <taxon>Methanobacteriati</taxon>
        <taxon>Methanobacteriota</taxon>
        <taxon>Methanomada group</taxon>
        <taxon>Methanobacteria</taxon>
        <taxon>Methanobacteriales</taxon>
        <taxon>Methanobacteriaceae</taxon>
        <taxon>Methanosphaera</taxon>
    </lineage>
</organism>
<dbReference type="EMBL" id="CP000102">
    <property type="protein sequence ID" value="ABC57743.1"/>
    <property type="molecule type" value="Genomic_DNA"/>
</dbReference>
<dbReference type="RefSeq" id="WP_011406942.1">
    <property type="nucleotide sequence ID" value="NC_007681.1"/>
</dbReference>
<dbReference type="SMR" id="Q2NEL0"/>
<dbReference type="STRING" id="339860.Msp_1367"/>
<dbReference type="KEGG" id="mst:Msp_1367"/>
<dbReference type="eggNOG" id="arCOG01559">
    <property type="taxonomic scope" value="Archaea"/>
</dbReference>
<dbReference type="HOGENOM" id="CLU_002794_11_1_2"/>
<dbReference type="OrthoDB" id="6290at2157"/>
<dbReference type="Proteomes" id="UP000001931">
    <property type="component" value="Chromosome"/>
</dbReference>
<dbReference type="GO" id="GO:0005829">
    <property type="term" value="C:cytosol"/>
    <property type="evidence" value="ECO:0007669"/>
    <property type="project" value="TreeGrafter"/>
</dbReference>
<dbReference type="GO" id="GO:1990904">
    <property type="term" value="C:ribonucleoprotein complex"/>
    <property type="evidence" value="ECO:0007669"/>
    <property type="project" value="TreeGrafter"/>
</dbReference>
<dbReference type="GO" id="GO:0005525">
    <property type="term" value="F:GTP binding"/>
    <property type="evidence" value="ECO:0007669"/>
    <property type="project" value="UniProtKB-UniRule"/>
</dbReference>
<dbReference type="GO" id="GO:0003924">
    <property type="term" value="F:GTPase activity"/>
    <property type="evidence" value="ECO:0007669"/>
    <property type="project" value="InterPro"/>
</dbReference>
<dbReference type="GO" id="GO:0003746">
    <property type="term" value="F:translation elongation factor activity"/>
    <property type="evidence" value="ECO:0007669"/>
    <property type="project" value="UniProtKB-UniRule"/>
</dbReference>
<dbReference type="CDD" id="cd01681">
    <property type="entry name" value="aeEF2_snRNP_like_IV"/>
    <property type="match status" value="1"/>
</dbReference>
<dbReference type="CDD" id="cd16268">
    <property type="entry name" value="EF2_II"/>
    <property type="match status" value="1"/>
</dbReference>
<dbReference type="CDD" id="cd16261">
    <property type="entry name" value="EF2_snRNP_III"/>
    <property type="match status" value="1"/>
</dbReference>
<dbReference type="CDD" id="cd01514">
    <property type="entry name" value="Elongation_Factor_C"/>
    <property type="match status" value="1"/>
</dbReference>
<dbReference type="FunFam" id="3.30.70.240:FF:000010">
    <property type="entry name" value="Elongation factor 2"/>
    <property type="match status" value="1"/>
</dbReference>
<dbReference type="FunFam" id="3.40.50.300:FF:000684">
    <property type="entry name" value="Elongation factor 2"/>
    <property type="match status" value="1"/>
</dbReference>
<dbReference type="FunFam" id="3.30.70.870:FF:000002">
    <property type="entry name" value="Translation elongation factor 2"/>
    <property type="match status" value="1"/>
</dbReference>
<dbReference type="Gene3D" id="3.30.230.10">
    <property type="match status" value="1"/>
</dbReference>
<dbReference type="Gene3D" id="3.30.70.240">
    <property type="match status" value="1"/>
</dbReference>
<dbReference type="Gene3D" id="3.30.70.870">
    <property type="entry name" value="Elongation Factor G (Translational Gtpase), domain 3"/>
    <property type="match status" value="1"/>
</dbReference>
<dbReference type="Gene3D" id="3.40.50.300">
    <property type="entry name" value="P-loop containing nucleotide triphosphate hydrolases"/>
    <property type="match status" value="1"/>
</dbReference>
<dbReference type="Gene3D" id="2.40.30.10">
    <property type="entry name" value="Translation factors"/>
    <property type="match status" value="1"/>
</dbReference>
<dbReference type="HAMAP" id="MF_00054_A">
    <property type="entry name" value="EF_G_EF_2_A"/>
    <property type="match status" value="1"/>
</dbReference>
<dbReference type="InterPro" id="IPR053905">
    <property type="entry name" value="EF-G-like_DII"/>
</dbReference>
<dbReference type="InterPro" id="IPR041095">
    <property type="entry name" value="EFG_II"/>
</dbReference>
<dbReference type="InterPro" id="IPR035647">
    <property type="entry name" value="EFG_III/V"/>
</dbReference>
<dbReference type="InterPro" id="IPR000640">
    <property type="entry name" value="EFG_V-like"/>
</dbReference>
<dbReference type="InterPro" id="IPR031157">
    <property type="entry name" value="G_TR_CS"/>
</dbReference>
<dbReference type="InterPro" id="IPR027417">
    <property type="entry name" value="P-loop_NTPase"/>
</dbReference>
<dbReference type="InterPro" id="IPR020568">
    <property type="entry name" value="Ribosomal_Su5_D2-typ_SF"/>
</dbReference>
<dbReference type="InterPro" id="IPR014721">
    <property type="entry name" value="Ribsml_uS5_D2-typ_fold_subgr"/>
</dbReference>
<dbReference type="InterPro" id="IPR005225">
    <property type="entry name" value="Small_GTP-bd"/>
</dbReference>
<dbReference type="InterPro" id="IPR000795">
    <property type="entry name" value="T_Tr_GTP-bd_dom"/>
</dbReference>
<dbReference type="InterPro" id="IPR009000">
    <property type="entry name" value="Transl_B-barrel_sf"/>
</dbReference>
<dbReference type="InterPro" id="IPR004543">
    <property type="entry name" value="Transl_elong_EFG/EF2_arc"/>
</dbReference>
<dbReference type="InterPro" id="IPR005517">
    <property type="entry name" value="Transl_elong_EFG/EF2_IV"/>
</dbReference>
<dbReference type="NCBIfam" id="TIGR00490">
    <property type="entry name" value="aEF-2"/>
    <property type="match status" value="1"/>
</dbReference>
<dbReference type="NCBIfam" id="TIGR00231">
    <property type="entry name" value="small_GTP"/>
    <property type="match status" value="1"/>
</dbReference>
<dbReference type="PANTHER" id="PTHR42908:SF3">
    <property type="entry name" value="ELONGATION FACTOR-LIKE GTPASE 1"/>
    <property type="match status" value="1"/>
</dbReference>
<dbReference type="PANTHER" id="PTHR42908">
    <property type="entry name" value="TRANSLATION ELONGATION FACTOR-RELATED"/>
    <property type="match status" value="1"/>
</dbReference>
<dbReference type="Pfam" id="PF22042">
    <property type="entry name" value="EF-G_D2"/>
    <property type="match status" value="1"/>
</dbReference>
<dbReference type="Pfam" id="PF00679">
    <property type="entry name" value="EFG_C"/>
    <property type="match status" value="1"/>
</dbReference>
<dbReference type="Pfam" id="PF14492">
    <property type="entry name" value="EFG_III"/>
    <property type="match status" value="1"/>
</dbReference>
<dbReference type="Pfam" id="PF03764">
    <property type="entry name" value="EFG_IV"/>
    <property type="match status" value="1"/>
</dbReference>
<dbReference type="Pfam" id="PF00009">
    <property type="entry name" value="GTP_EFTU"/>
    <property type="match status" value="1"/>
</dbReference>
<dbReference type="PRINTS" id="PR00315">
    <property type="entry name" value="ELONGATNFCT"/>
</dbReference>
<dbReference type="SMART" id="SM00838">
    <property type="entry name" value="EFG_C"/>
    <property type="match status" value="1"/>
</dbReference>
<dbReference type="SMART" id="SM00889">
    <property type="entry name" value="EFG_IV"/>
    <property type="match status" value="1"/>
</dbReference>
<dbReference type="SUPFAM" id="SSF54980">
    <property type="entry name" value="EF-G C-terminal domain-like"/>
    <property type="match status" value="2"/>
</dbReference>
<dbReference type="SUPFAM" id="SSF52540">
    <property type="entry name" value="P-loop containing nucleoside triphosphate hydrolases"/>
    <property type="match status" value="1"/>
</dbReference>
<dbReference type="SUPFAM" id="SSF54211">
    <property type="entry name" value="Ribosomal protein S5 domain 2-like"/>
    <property type="match status" value="1"/>
</dbReference>
<dbReference type="SUPFAM" id="SSF50447">
    <property type="entry name" value="Translation proteins"/>
    <property type="match status" value="1"/>
</dbReference>
<dbReference type="PROSITE" id="PS00301">
    <property type="entry name" value="G_TR_1"/>
    <property type="match status" value="1"/>
</dbReference>
<dbReference type="PROSITE" id="PS51722">
    <property type="entry name" value="G_TR_2"/>
    <property type="match status" value="1"/>
</dbReference>
<reference key="1">
    <citation type="journal article" date="2006" name="J. Bacteriol.">
        <title>The genome sequence of Methanosphaera stadtmanae reveals why this human intestinal archaeon is restricted to methanol and H2 for methane formation and ATP synthesis.</title>
        <authorList>
            <person name="Fricke W.F."/>
            <person name="Seedorf H."/>
            <person name="Henne A."/>
            <person name="Kruer M."/>
            <person name="Liesegang H."/>
            <person name="Hedderich R."/>
            <person name="Gottschalk G."/>
            <person name="Thauer R.K."/>
        </authorList>
    </citation>
    <scope>NUCLEOTIDE SEQUENCE [LARGE SCALE GENOMIC DNA]</scope>
    <source>
        <strain>ATCC 43021 / DSM 3091 / JCM 11832 / MCB-3</strain>
    </source>
</reference>
<feature type="chain" id="PRO_0000263537" description="Elongation factor 2">
    <location>
        <begin position="1"/>
        <end position="730"/>
    </location>
</feature>
<feature type="domain" description="tr-type G">
    <location>
        <begin position="19"/>
        <end position="229"/>
    </location>
</feature>
<feature type="binding site" evidence="1">
    <location>
        <begin position="28"/>
        <end position="35"/>
    </location>
    <ligand>
        <name>GTP</name>
        <dbReference type="ChEBI" id="CHEBI:37565"/>
    </ligand>
</feature>
<feature type="binding site" evidence="1">
    <location>
        <begin position="94"/>
        <end position="98"/>
    </location>
    <ligand>
        <name>GTP</name>
        <dbReference type="ChEBI" id="CHEBI:37565"/>
    </ligand>
</feature>
<feature type="binding site" evidence="1">
    <location>
        <begin position="148"/>
        <end position="151"/>
    </location>
    <ligand>
        <name>GTP</name>
        <dbReference type="ChEBI" id="CHEBI:37565"/>
    </ligand>
</feature>
<feature type="modified residue" description="Diphthamide" evidence="1">
    <location>
        <position position="597"/>
    </location>
</feature>
<accession>Q2NEL0</accession>